<feature type="chain" id="PRO_0000177321" description="Large ribosomal subunit protein bL35">
    <location>
        <begin position="1"/>
        <end position="66"/>
    </location>
</feature>
<feature type="region of interest" description="Disordered" evidence="2">
    <location>
        <begin position="1"/>
        <end position="26"/>
    </location>
</feature>
<accession>Q72ZG3</accession>
<organism>
    <name type="scientific">Bacillus cereus (strain ATCC 10987 / NRS 248)</name>
    <dbReference type="NCBI Taxonomy" id="222523"/>
    <lineage>
        <taxon>Bacteria</taxon>
        <taxon>Bacillati</taxon>
        <taxon>Bacillota</taxon>
        <taxon>Bacilli</taxon>
        <taxon>Bacillales</taxon>
        <taxon>Bacillaceae</taxon>
        <taxon>Bacillus</taxon>
        <taxon>Bacillus cereus group</taxon>
    </lineage>
</organism>
<evidence type="ECO:0000255" key="1">
    <source>
        <dbReference type="HAMAP-Rule" id="MF_00514"/>
    </source>
</evidence>
<evidence type="ECO:0000256" key="2">
    <source>
        <dbReference type="SAM" id="MobiDB-lite"/>
    </source>
</evidence>
<evidence type="ECO:0000305" key="3"/>
<name>RL35_BACC1</name>
<protein>
    <recommendedName>
        <fullName evidence="1">Large ribosomal subunit protein bL35</fullName>
    </recommendedName>
    <alternativeName>
        <fullName evidence="3">50S ribosomal protein L35</fullName>
    </alternativeName>
</protein>
<proteinExistence type="inferred from homology"/>
<gene>
    <name evidence="1" type="primary">rpmI</name>
    <name type="ordered locus">BCE_4705</name>
</gene>
<dbReference type="EMBL" id="AE017194">
    <property type="protein sequence ID" value="AAS43606.1"/>
    <property type="molecule type" value="Genomic_DNA"/>
</dbReference>
<dbReference type="SMR" id="Q72ZG3"/>
<dbReference type="KEGG" id="bca:BCE_4705"/>
<dbReference type="HOGENOM" id="CLU_169643_3_0_9"/>
<dbReference type="Proteomes" id="UP000002527">
    <property type="component" value="Chromosome"/>
</dbReference>
<dbReference type="GO" id="GO:0022625">
    <property type="term" value="C:cytosolic large ribosomal subunit"/>
    <property type="evidence" value="ECO:0007669"/>
    <property type="project" value="TreeGrafter"/>
</dbReference>
<dbReference type="GO" id="GO:0003735">
    <property type="term" value="F:structural constituent of ribosome"/>
    <property type="evidence" value="ECO:0007669"/>
    <property type="project" value="InterPro"/>
</dbReference>
<dbReference type="GO" id="GO:0006412">
    <property type="term" value="P:translation"/>
    <property type="evidence" value="ECO:0007669"/>
    <property type="project" value="UniProtKB-UniRule"/>
</dbReference>
<dbReference type="FunFam" id="4.10.410.60:FF:000001">
    <property type="entry name" value="50S ribosomal protein L35"/>
    <property type="match status" value="1"/>
</dbReference>
<dbReference type="Gene3D" id="4.10.410.60">
    <property type="match status" value="1"/>
</dbReference>
<dbReference type="HAMAP" id="MF_00514">
    <property type="entry name" value="Ribosomal_bL35"/>
    <property type="match status" value="1"/>
</dbReference>
<dbReference type="InterPro" id="IPR001706">
    <property type="entry name" value="Ribosomal_bL35"/>
</dbReference>
<dbReference type="InterPro" id="IPR021137">
    <property type="entry name" value="Ribosomal_bL35-like"/>
</dbReference>
<dbReference type="InterPro" id="IPR018265">
    <property type="entry name" value="Ribosomal_bL35_CS"/>
</dbReference>
<dbReference type="InterPro" id="IPR037229">
    <property type="entry name" value="Ribosomal_bL35_sf"/>
</dbReference>
<dbReference type="NCBIfam" id="TIGR00001">
    <property type="entry name" value="rpmI_bact"/>
    <property type="match status" value="1"/>
</dbReference>
<dbReference type="PANTHER" id="PTHR33343">
    <property type="entry name" value="54S RIBOSOMAL PROTEIN BL35M"/>
    <property type="match status" value="1"/>
</dbReference>
<dbReference type="PANTHER" id="PTHR33343:SF1">
    <property type="entry name" value="LARGE RIBOSOMAL SUBUNIT PROTEIN BL35M"/>
    <property type="match status" value="1"/>
</dbReference>
<dbReference type="Pfam" id="PF01632">
    <property type="entry name" value="Ribosomal_L35p"/>
    <property type="match status" value="1"/>
</dbReference>
<dbReference type="PRINTS" id="PR00064">
    <property type="entry name" value="RIBOSOMALL35"/>
</dbReference>
<dbReference type="SUPFAM" id="SSF143034">
    <property type="entry name" value="L35p-like"/>
    <property type="match status" value="1"/>
</dbReference>
<dbReference type="PROSITE" id="PS00936">
    <property type="entry name" value="RIBOSOMAL_L35"/>
    <property type="match status" value="1"/>
</dbReference>
<reference key="1">
    <citation type="journal article" date="2004" name="Nucleic Acids Res.">
        <title>The genome sequence of Bacillus cereus ATCC 10987 reveals metabolic adaptations and a large plasmid related to Bacillus anthracis pXO1.</title>
        <authorList>
            <person name="Rasko D.A."/>
            <person name="Ravel J."/>
            <person name="Oekstad O.A."/>
            <person name="Helgason E."/>
            <person name="Cer R.Z."/>
            <person name="Jiang L."/>
            <person name="Shores K.A."/>
            <person name="Fouts D.E."/>
            <person name="Tourasse N.J."/>
            <person name="Angiuoli S.V."/>
            <person name="Kolonay J.F."/>
            <person name="Nelson W.C."/>
            <person name="Kolstoe A.-B."/>
            <person name="Fraser C.M."/>
            <person name="Read T.D."/>
        </authorList>
    </citation>
    <scope>NUCLEOTIDE SEQUENCE [LARGE SCALE GENOMIC DNA]</scope>
    <source>
        <strain>ATCC 10987 / NRS 248</strain>
    </source>
</reference>
<comment type="similarity">
    <text evidence="1">Belongs to the bacterial ribosomal protein bL35 family.</text>
</comment>
<keyword id="KW-0687">Ribonucleoprotein</keyword>
<keyword id="KW-0689">Ribosomal protein</keyword>
<sequence>MPKQKTHRGAAKRFKKTGSGKLKRSHAYTSHLFANKSTKAKRKLRKAGVVSAGDFKRIRQMLDNLK</sequence>